<proteinExistence type="inferred from homology"/>
<accession>C1D0N4</accession>
<organism>
    <name type="scientific">Deinococcus deserti (strain DSM 17065 / CIP 109153 / LMG 22923 / VCD115)</name>
    <dbReference type="NCBI Taxonomy" id="546414"/>
    <lineage>
        <taxon>Bacteria</taxon>
        <taxon>Thermotogati</taxon>
        <taxon>Deinococcota</taxon>
        <taxon>Deinococci</taxon>
        <taxon>Deinococcales</taxon>
        <taxon>Deinococcaceae</taxon>
        <taxon>Deinococcus</taxon>
    </lineage>
</organism>
<sequence length="350" mass="36840">MTAPSASRLSLGIVALGAYTPERIVRNEDFEARMDTNAAWIESRTGIRERRFAAEHEYTSDMGVRAVQDMLRRDPQALTDVDAIICATVSPDALMPSTAALIGMQVGLVGAAAFDLSTACSGFVYGLSVASGLIHAGTARRVLVVGAEVLSKIVDQDDRGTAILFGDGAGAAVVGPVPEGYGFQDFVLGADGNGGSSLYMRSVAKQLPGGFAMGDFTGMNGREVFKFAVRVLGDSGTQALEKSGLTTADVDWVIPHQANVRIIEAAMERFGLPMSKTIINLDRYGNTSSATVPLVLREGLDDGRIRDGQQLLLIAFGGGLSWVAGTMKWWGGAPSLQPDRAAEHSAGVQG</sequence>
<evidence type="ECO:0000255" key="1">
    <source>
        <dbReference type="HAMAP-Rule" id="MF_01815"/>
    </source>
</evidence>
<gene>
    <name evidence="1" type="primary">fabH</name>
    <name type="ordered locus">Deide_05700</name>
</gene>
<keyword id="KW-0012">Acyltransferase</keyword>
<keyword id="KW-0963">Cytoplasm</keyword>
<keyword id="KW-0275">Fatty acid biosynthesis</keyword>
<keyword id="KW-0276">Fatty acid metabolism</keyword>
<keyword id="KW-0444">Lipid biosynthesis</keyword>
<keyword id="KW-0443">Lipid metabolism</keyword>
<keyword id="KW-0511">Multifunctional enzyme</keyword>
<keyword id="KW-1185">Reference proteome</keyword>
<keyword id="KW-0808">Transferase</keyword>
<reference key="1">
    <citation type="journal article" date="2009" name="PLoS Genet.">
        <title>Alliance of proteomics and genomics to unravel the specificities of Sahara bacterium Deinococcus deserti.</title>
        <authorList>
            <person name="de Groot A."/>
            <person name="Dulermo R."/>
            <person name="Ortet P."/>
            <person name="Blanchard L."/>
            <person name="Guerin P."/>
            <person name="Fernandez B."/>
            <person name="Vacherie B."/>
            <person name="Dossat C."/>
            <person name="Jolivet E."/>
            <person name="Siguier P."/>
            <person name="Chandler M."/>
            <person name="Barakat M."/>
            <person name="Dedieu A."/>
            <person name="Barbe V."/>
            <person name="Heulin T."/>
            <person name="Sommer S."/>
            <person name="Achouak W."/>
            <person name="Armengaud J."/>
        </authorList>
    </citation>
    <scope>NUCLEOTIDE SEQUENCE [LARGE SCALE GENOMIC DNA]</scope>
    <source>
        <strain>DSM 17065 / CIP 109153 / LMG 22923 / VCD115</strain>
    </source>
</reference>
<dbReference type="EC" id="2.3.1.180" evidence="1"/>
<dbReference type="EMBL" id="CP001114">
    <property type="protein sequence ID" value="ACO45408.1"/>
    <property type="molecule type" value="Genomic_DNA"/>
</dbReference>
<dbReference type="RefSeq" id="WP_012692531.1">
    <property type="nucleotide sequence ID" value="NC_012526.1"/>
</dbReference>
<dbReference type="SMR" id="C1D0N4"/>
<dbReference type="STRING" id="546414.Deide_05700"/>
<dbReference type="PaxDb" id="546414-Deide_05700"/>
<dbReference type="KEGG" id="ddr:Deide_05700"/>
<dbReference type="eggNOG" id="COG0332">
    <property type="taxonomic scope" value="Bacteria"/>
</dbReference>
<dbReference type="HOGENOM" id="CLU_039592_3_1_0"/>
<dbReference type="OrthoDB" id="9815506at2"/>
<dbReference type="UniPathway" id="UPA00094"/>
<dbReference type="Proteomes" id="UP000002208">
    <property type="component" value="Chromosome"/>
</dbReference>
<dbReference type="GO" id="GO:0005737">
    <property type="term" value="C:cytoplasm"/>
    <property type="evidence" value="ECO:0007669"/>
    <property type="project" value="UniProtKB-SubCell"/>
</dbReference>
<dbReference type="GO" id="GO:0004315">
    <property type="term" value="F:3-oxoacyl-[acyl-carrier-protein] synthase activity"/>
    <property type="evidence" value="ECO:0007669"/>
    <property type="project" value="InterPro"/>
</dbReference>
<dbReference type="GO" id="GO:0033818">
    <property type="term" value="F:beta-ketoacyl-acyl-carrier-protein synthase III activity"/>
    <property type="evidence" value="ECO:0007669"/>
    <property type="project" value="UniProtKB-UniRule"/>
</dbReference>
<dbReference type="GO" id="GO:0006633">
    <property type="term" value="P:fatty acid biosynthetic process"/>
    <property type="evidence" value="ECO:0007669"/>
    <property type="project" value="UniProtKB-UniRule"/>
</dbReference>
<dbReference type="GO" id="GO:0044550">
    <property type="term" value="P:secondary metabolite biosynthetic process"/>
    <property type="evidence" value="ECO:0007669"/>
    <property type="project" value="TreeGrafter"/>
</dbReference>
<dbReference type="CDD" id="cd00830">
    <property type="entry name" value="KAS_III"/>
    <property type="match status" value="1"/>
</dbReference>
<dbReference type="FunFam" id="3.40.47.10:FF:000004">
    <property type="entry name" value="3-oxoacyl-[acyl-carrier-protein] synthase 3"/>
    <property type="match status" value="1"/>
</dbReference>
<dbReference type="Gene3D" id="3.40.47.10">
    <property type="match status" value="1"/>
</dbReference>
<dbReference type="HAMAP" id="MF_01815">
    <property type="entry name" value="FabH"/>
    <property type="match status" value="1"/>
</dbReference>
<dbReference type="InterPro" id="IPR013747">
    <property type="entry name" value="ACP_syn_III_C"/>
</dbReference>
<dbReference type="InterPro" id="IPR013751">
    <property type="entry name" value="ACP_syn_III_N"/>
</dbReference>
<dbReference type="InterPro" id="IPR004655">
    <property type="entry name" value="FabH"/>
</dbReference>
<dbReference type="InterPro" id="IPR016039">
    <property type="entry name" value="Thiolase-like"/>
</dbReference>
<dbReference type="NCBIfam" id="TIGR00747">
    <property type="entry name" value="fabH"/>
    <property type="match status" value="1"/>
</dbReference>
<dbReference type="NCBIfam" id="NF006829">
    <property type="entry name" value="PRK09352.1"/>
    <property type="match status" value="1"/>
</dbReference>
<dbReference type="PANTHER" id="PTHR34069">
    <property type="entry name" value="3-OXOACYL-[ACYL-CARRIER-PROTEIN] SYNTHASE 3"/>
    <property type="match status" value="1"/>
</dbReference>
<dbReference type="PANTHER" id="PTHR34069:SF2">
    <property type="entry name" value="BETA-KETOACYL-[ACYL-CARRIER-PROTEIN] SYNTHASE III"/>
    <property type="match status" value="1"/>
</dbReference>
<dbReference type="Pfam" id="PF08545">
    <property type="entry name" value="ACP_syn_III"/>
    <property type="match status" value="1"/>
</dbReference>
<dbReference type="Pfam" id="PF08541">
    <property type="entry name" value="ACP_syn_III_C"/>
    <property type="match status" value="1"/>
</dbReference>
<dbReference type="SUPFAM" id="SSF53901">
    <property type="entry name" value="Thiolase-like"/>
    <property type="match status" value="1"/>
</dbReference>
<protein>
    <recommendedName>
        <fullName evidence="1">Beta-ketoacyl-[acyl-carrier-protein] synthase III</fullName>
        <shortName evidence="1">Beta-ketoacyl-ACP synthase III</shortName>
        <shortName evidence="1">KAS III</shortName>
        <ecNumber evidence="1">2.3.1.180</ecNumber>
    </recommendedName>
    <alternativeName>
        <fullName evidence="1">3-oxoacyl-[acyl-carrier-protein] synthase 3</fullName>
    </alternativeName>
    <alternativeName>
        <fullName evidence="1">3-oxoacyl-[acyl-carrier-protein] synthase III</fullName>
    </alternativeName>
</protein>
<name>FABH_DEIDV</name>
<comment type="function">
    <text evidence="1">Catalyzes the condensation reaction of fatty acid synthesis by the addition to an acyl acceptor of two carbons from malonyl-ACP. Catalyzes the first condensation reaction which initiates fatty acid synthesis and may therefore play a role in governing the total rate of fatty acid production. Possesses both acetoacetyl-ACP synthase and acetyl transacylase activities. Its substrate specificity determines the biosynthesis of branched-chain and/or straight-chain of fatty acids.</text>
</comment>
<comment type="catalytic activity">
    <reaction evidence="1">
        <text>malonyl-[ACP] + acetyl-CoA + H(+) = 3-oxobutanoyl-[ACP] + CO2 + CoA</text>
        <dbReference type="Rhea" id="RHEA:12080"/>
        <dbReference type="Rhea" id="RHEA-COMP:9623"/>
        <dbReference type="Rhea" id="RHEA-COMP:9625"/>
        <dbReference type="ChEBI" id="CHEBI:15378"/>
        <dbReference type="ChEBI" id="CHEBI:16526"/>
        <dbReference type="ChEBI" id="CHEBI:57287"/>
        <dbReference type="ChEBI" id="CHEBI:57288"/>
        <dbReference type="ChEBI" id="CHEBI:78449"/>
        <dbReference type="ChEBI" id="CHEBI:78450"/>
        <dbReference type="EC" id="2.3.1.180"/>
    </reaction>
</comment>
<comment type="pathway">
    <text evidence="1">Lipid metabolism; fatty acid biosynthesis.</text>
</comment>
<comment type="subunit">
    <text evidence="1">Homodimer.</text>
</comment>
<comment type="subcellular location">
    <subcellularLocation>
        <location evidence="1">Cytoplasm</location>
    </subcellularLocation>
</comment>
<comment type="domain">
    <text evidence="1">The last Arg residue of the ACP-binding site is essential for the weak association between ACP/AcpP and FabH.</text>
</comment>
<comment type="similarity">
    <text evidence="1">Belongs to the thiolase-like superfamily. FabH family.</text>
</comment>
<feature type="chain" id="PRO_1000215997" description="Beta-ketoacyl-[acyl-carrier-protein] synthase III">
    <location>
        <begin position="1"/>
        <end position="350"/>
    </location>
</feature>
<feature type="region of interest" description="ACP-binding" evidence="1">
    <location>
        <begin position="257"/>
        <end position="261"/>
    </location>
</feature>
<feature type="active site" evidence="1">
    <location>
        <position position="120"/>
    </location>
</feature>
<feature type="active site" evidence="1">
    <location>
        <position position="256"/>
    </location>
</feature>
<feature type="active site" evidence="1">
    <location>
        <position position="286"/>
    </location>
</feature>